<reference key="1">
    <citation type="journal article" date="2005" name="Nucleic Acids Res.">
        <title>Genome dynamics and diversity of Shigella species, the etiologic agents of bacillary dysentery.</title>
        <authorList>
            <person name="Yang F."/>
            <person name="Yang J."/>
            <person name="Zhang X."/>
            <person name="Chen L."/>
            <person name="Jiang Y."/>
            <person name="Yan Y."/>
            <person name="Tang X."/>
            <person name="Wang J."/>
            <person name="Xiong Z."/>
            <person name="Dong J."/>
            <person name="Xue Y."/>
            <person name="Zhu Y."/>
            <person name="Xu X."/>
            <person name="Sun L."/>
            <person name="Chen S."/>
            <person name="Nie H."/>
            <person name="Peng J."/>
            <person name="Xu J."/>
            <person name="Wang Y."/>
            <person name="Yuan Z."/>
            <person name="Wen Y."/>
            <person name="Yao Z."/>
            <person name="Shen Y."/>
            <person name="Qiang B."/>
            <person name="Hou Y."/>
            <person name="Yu J."/>
            <person name="Jin Q."/>
        </authorList>
    </citation>
    <scope>NUCLEOTIDE SEQUENCE [LARGE SCALE GENOMIC DNA]</scope>
    <source>
        <strain>Sb227</strain>
    </source>
</reference>
<name>QUEF_SHIBS</name>
<keyword id="KW-0963">Cytoplasm</keyword>
<keyword id="KW-0521">NADP</keyword>
<keyword id="KW-0560">Oxidoreductase</keyword>
<keyword id="KW-0671">Queuosine biosynthesis</keyword>
<protein>
    <recommendedName>
        <fullName evidence="1">NADPH-dependent 7-cyano-7-deazaguanine reductase</fullName>
        <ecNumber evidence="1">1.7.1.13</ecNumber>
    </recommendedName>
    <alternativeName>
        <fullName evidence="1">7-cyano-7-carbaguanine reductase</fullName>
    </alternativeName>
    <alternativeName>
        <fullName evidence="1">NADPH-dependent nitrile oxidoreductase</fullName>
    </alternativeName>
    <alternativeName>
        <fullName evidence="1">PreQ(0) reductase</fullName>
    </alternativeName>
</protein>
<proteinExistence type="inferred from homology"/>
<evidence type="ECO:0000255" key="1">
    <source>
        <dbReference type="HAMAP-Rule" id="MF_00817"/>
    </source>
</evidence>
<gene>
    <name evidence="1" type="primary">queF</name>
    <name type="ordered locus">SBO_2675</name>
</gene>
<sequence length="282" mass="32588">MSSYANHQALAGLTLGKSTDYRDTYDASLLQGVPRSLNRDPLGLKADNLPFHGTDIWTLYELSWLNAKGLPQVAVGHVELDYTSVNLIESKSFKLYLNSFNQTRFNNWDEVRQTLERDLSTCAQGKISVALYRLDELEGQPIGHFNGTCIDDQDITIDNYEFTTDYLENATCGEKVVEETLVSHLLKSNCLITHQPDWGSIQIQYRGRQIDREKLLRYLVSFRHHNEFHEQCVERIFNDLLRFCQPEKLSVYARYTRRGGLDINPWRSNSDFVPSTTRLVRQ</sequence>
<comment type="function">
    <text evidence="1">Catalyzes the NADPH-dependent reduction of 7-cyano-7-deazaguanine (preQ0) to 7-aminomethyl-7-deazaguanine (preQ1).</text>
</comment>
<comment type="catalytic activity">
    <reaction evidence="1">
        <text>7-aminomethyl-7-carbaguanine + 2 NADP(+) = 7-cyano-7-deazaguanine + 2 NADPH + 3 H(+)</text>
        <dbReference type="Rhea" id="RHEA:13409"/>
        <dbReference type="ChEBI" id="CHEBI:15378"/>
        <dbReference type="ChEBI" id="CHEBI:45075"/>
        <dbReference type="ChEBI" id="CHEBI:57783"/>
        <dbReference type="ChEBI" id="CHEBI:58349"/>
        <dbReference type="ChEBI" id="CHEBI:58703"/>
        <dbReference type="EC" id="1.7.1.13"/>
    </reaction>
</comment>
<comment type="pathway">
    <text evidence="1">tRNA modification; tRNA-queuosine biosynthesis.</text>
</comment>
<comment type="subunit">
    <text evidence="1">Homodimer.</text>
</comment>
<comment type="subcellular location">
    <subcellularLocation>
        <location evidence="1">Cytoplasm</location>
    </subcellularLocation>
</comment>
<comment type="similarity">
    <text evidence="1">Belongs to the GTP cyclohydrolase I family. QueF type 2 subfamily.</text>
</comment>
<organism>
    <name type="scientific">Shigella boydii serotype 4 (strain Sb227)</name>
    <dbReference type="NCBI Taxonomy" id="300268"/>
    <lineage>
        <taxon>Bacteria</taxon>
        <taxon>Pseudomonadati</taxon>
        <taxon>Pseudomonadota</taxon>
        <taxon>Gammaproteobacteria</taxon>
        <taxon>Enterobacterales</taxon>
        <taxon>Enterobacteriaceae</taxon>
        <taxon>Shigella</taxon>
    </lineage>
</organism>
<dbReference type="EC" id="1.7.1.13" evidence="1"/>
<dbReference type="EMBL" id="CP000036">
    <property type="protein sequence ID" value="ABB67212.1"/>
    <property type="molecule type" value="Genomic_DNA"/>
</dbReference>
<dbReference type="RefSeq" id="WP_000100420.1">
    <property type="nucleotide sequence ID" value="NC_007613.1"/>
</dbReference>
<dbReference type="SMR" id="Q31XJ6"/>
<dbReference type="GeneID" id="93779204"/>
<dbReference type="KEGG" id="sbo:SBO_2675"/>
<dbReference type="HOGENOM" id="CLU_054738_0_0_6"/>
<dbReference type="UniPathway" id="UPA00392"/>
<dbReference type="Proteomes" id="UP000007067">
    <property type="component" value="Chromosome"/>
</dbReference>
<dbReference type="GO" id="GO:0005737">
    <property type="term" value="C:cytoplasm"/>
    <property type="evidence" value="ECO:0007669"/>
    <property type="project" value="UniProtKB-SubCell"/>
</dbReference>
<dbReference type="GO" id="GO:0033739">
    <property type="term" value="F:preQ1 synthase activity"/>
    <property type="evidence" value="ECO:0007669"/>
    <property type="project" value="UniProtKB-UniRule"/>
</dbReference>
<dbReference type="GO" id="GO:0008616">
    <property type="term" value="P:queuosine biosynthetic process"/>
    <property type="evidence" value="ECO:0007669"/>
    <property type="project" value="UniProtKB-UniRule"/>
</dbReference>
<dbReference type="GO" id="GO:0006400">
    <property type="term" value="P:tRNA modification"/>
    <property type="evidence" value="ECO:0007669"/>
    <property type="project" value="UniProtKB-UniRule"/>
</dbReference>
<dbReference type="FunFam" id="3.30.1130.10:FF:000004">
    <property type="entry name" value="NADPH-dependent 7-cyano-7-deazaguanine reductase"/>
    <property type="match status" value="1"/>
</dbReference>
<dbReference type="FunFam" id="3.30.1130.10:FF:000006">
    <property type="entry name" value="NADPH-dependent 7-cyano-7-deazaguanine reductase"/>
    <property type="match status" value="1"/>
</dbReference>
<dbReference type="Gene3D" id="3.30.1130.10">
    <property type="match status" value="2"/>
</dbReference>
<dbReference type="HAMAP" id="MF_00817">
    <property type="entry name" value="QueF_type2"/>
    <property type="match status" value="1"/>
</dbReference>
<dbReference type="InterPro" id="IPR043133">
    <property type="entry name" value="GTP-CH-I_C/QueF"/>
</dbReference>
<dbReference type="InterPro" id="IPR050084">
    <property type="entry name" value="NADPH_dep_7-cyano-7-deazaG_red"/>
</dbReference>
<dbReference type="InterPro" id="IPR029500">
    <property type="entry name" value="QueF"/>
</dbReference>
<dbReference type="InterPro" id="IPR029139">
    <property type="entry name" value="QueF_N"/>
</dbReference>
<dbReference type="InterPro" id="IPR016428">
    <property type="entry name" value="QueF_type2"/>
</dbReference>
<dbReference type="NCBIfam" id="TIGR03138">
    <property type="entry name" value="QueF"/>
    <property type="match status" value="1"/>
</dbReference>
<dbReference type="PANTHER" id="PTHR34354">
    <property type="entry name" value="NADPH-DEPENDENT 7-CYANO-7-DEAZAGUANINE REDUCTASE"/>
    <property type="match status" value="1"/>
</dbReference>
<dbReference type="PANTHER" id="PTHR34354:SF1">
    <property type="entry name" value="NADPH-DEPENDENT 7-CYANO-7-DEAZAGUANINE REDUCTASE"/>
    <property type="match status" value="1"/>
</dbReference>
<dbReference type="Pfam" id="PF14489">
    <property type="entry name" value="QueF"/>
    <property type="match status" value="1"/>
</dbReference>
<dbReference type="Pfam" id="PF14819">
    <property type="entry name" value="QueF_N"/>
    <property type="match status" value="1"/>
</dbReference>
<dbReference type="PIRSF" id="PIRSF004750">
    <property type="entry name" value="Nitrile_oxidored_YqcD_prd"/>
    <property type="match status" value="1"/>
</dbReference>
<dbReference type="SUPFAM" id="SSF55620">
    <property type="entry name" value="Tetrahydrobiopterin biosynthesis enzymes-like"/>
    <property type="match status" value="1"/>
</dbReference>
<accession>Q31XJ6</accession>
<feature type="chain" id="PRO_0000247719" description="NADPH-dependent 7-cyano-7-deazaguanine reductase">
    <location>
        <begin position="1"/>
        <end position="282"/>
    </location>
</feature>
<feature type="active site" description="Thioimide intermediate" evidence="1">
    <location>
        <position position="190"/>
    </location>
</feature>
<feature type="active site" description="Proton donor" evidence="1">
    <location>
        <position position="197"/>
    </location>
</feature>
<feature type="binding site" evidence="1">
    <location>
        <begin position="88"/>
        <end position="90"/>
    </location>
    <ligand>
        <name>substrate</name>
    </ligand>
</feature>
<feature type="binding site" evidence="1">
    <location>
        <begin position="90"/>
        <end position="91"/>
    </location>
    <ligand>
        <name>NADPH</name>
        <dbReference type="ChEBI" id="CHEBI:57783"/>
    </ligand>
</feature>
<feature type="binding site" evidence="1">
    <location>
        <begin position="229"/>
        <end position="230"/>
    </location>
    <ligand>
        <name>substrate</name>
    </ligand>
</feature>
<feature type="binding site" evidence="1">
    <location>
        <begin position="258"/>
        <end position="259"/>
    </location>
    <ligand>
        <name>NADPH</name>
        <dbReference type="ChEBI" id="CHEBI:57783"/>
    </ligand>
</feature>